<organism>
    <name type="scientific">Emericella nidulans</name>
    <name type="common">Aspergillus nidulans</name>
    <dbReference type="NCBI Taxonomy" id="162425"/>
    <lineage>
        <taxon>Eukaryota</taxon>
        <taxon>Fungi</taxon>
        <taxon>Dikarya</taxon>
        <taxon>Ascomycota</taxon>
        <taxon>Pezizomycotina</taxon>
        <taxon>Eurotiomycetes</taxon>
        <taxon>Eurotiomycetidae</taxon>
        <taxon>Eurotiales</taxon>
        <taxon>Aspergillaceae</taxon>
        <taxon>Aspergillus</taxon>
        <taxon>Aspergillus subgen. Nidulantes</taxon>
    </lineage>
</organism>
<comment type="function">
    <text evidence="2 3 4">Alpha-ketoglutarate-dependent xanthine dioxygenase is a non-heme mononuclear Fe(2+) enzyme that decarboxylates alpha-ketoglutarate to succinate and CO(2) while hydroxylating xanthine to generate uric acid (PubMed:15948966, PubMed:17429948, PubMed:18036331). Allows xanthine utilization as a nitrogen source (PubMed:15948966). Whereas xanA is highly specific for xanthine, alpha-ketoadipic acid can replace alpha-ketoglutarate as a cosubstrate (PubMed:17429948). Exhibits ferroxidase activity in the absence of substrates (PubMed:18036331).</text>
</comment>
<comment type="catalytic activity">
    <reaction evidence="2 3 4">
        <text>xanthine + 2-oxoglutarate + O2 = urate + succinate + CO2</text>
        <dbReference type="Rhea" id="RHEA:43120"/>
        <dbReference type="ChEBI" id="CHEBI:15379"/>
        <dbReference type="ChEBI" id="CHEBI:16526"/>
        <dbReference type="ChEBI" id="CHEBI:16810"/>
        <dbReference type="ChEBI" id="CHEBI:17712"/>
        <dbReference type="ChEBI" id="CHEBI:17775"/>
        <dbReference type="ChEBI" id="CHEBI:30031"/>
        <dbReference type="EC" id="1.14.11.48"/>
    </reaction>
    <physiologicalReaction direction="left-to-right" evidence="2 3 4">
        <dbReference type="Rhea" id="RHEA:43121"/>
    </physiologicalReaction>
</comment>
<comment type="cofactor">
    <cofactor evidence="3 4">
        <name>Fe(2+)</name>
        <dbReference type="ChEBI" id="CHEBI:29033"/>
    </cofactor>
    <text evidence="1">Binds 1 Fe(2+) ion per subunit.</text>
</comment>
<comment type="activity regulation">
    <text evidence="3 4">Cu(2+) and Zn(2+) completely inhibit the xanthine dioxygenase activity, whereas Co(2+), Mn(2+), and Ni(2+) partially inhibit the activity. The inactive metal ions are presumed to compete for the Fe(2+)-binding site (PubMed:17429948). N-oxalylglycine (NOG), a known inhibitor of several Fe(2+)/alpha-ketoglutarate-dependent dioxygenase family members, competes with alpha-ketoglutarate and provides a Ki of 0.12 uM for inhibition (PubMed:17429948). 6,8-dihydroxypurine acts as a slow-binding competitive inhibitor (PubMed:18036331). The thiol-specific inhibitors 5,5'-dithiobis(2-nitrobenzoic acid) (DTNB) and iodoacetamide, inhibit also the catalytic activity (PubMed:18036331).</text>
</comment>
<comment type="biophysicochemical properties">
    <kinetics>
        <KM evidence="3 4">31.1 uM for 2-oxoglutarate (at 25 degrees Celsius)</KM>
        <KM evidence="2 3">50 uM for 2-oxoglutarate (at 30 degrees Celsius)</KM>
        <KM evidence="3 4">45.2 uM for xanthine (at 25 degrees Celsius)</KM>
        <KM evidence="2 3">46 uM for xanthine (at 30 degrees Celsius)</KM>
        <KM evidence="3">0.16 mM for alpha-ketoadipic acid (at 25 degrees Celsius)</KM>
        <KM evidence="4">0.4 mM for 9-methylxanthine (at 25 degrees Celsius)</KM>
    </kinetics>
    <phDependence>
        <text evidence="2 3">Optimum pH is 6.5 to 7.4.</text>
    </phDependence>
</comment>
<comment type="subcellular location">
    <subcellularLocation>
        <location evidence="5">Cytoplasm</location>
        <location evidence="5">Cytosol</location>
    </subcellularLocation>
</comment>
<comment type="PTM">
    <text evidence="3">Glycosylated (PubMed:17429948). Is subject to both N- and O-linked glycosylation (PubMed:17429948).</text>
</comment>
<comment type="PTM">
    <text evidence="3">Phosphorylated.</text>
</comment>
<comment type="similarity">
    <text evidence="7">Belongs to the TfdA dioxygenase family.</text>
</comment>
<sequence length="370" mass="41305">MPAITVKPLTPPAGSAIDFGAVITDVDLEHLTDGDFSTIRSALYTHLVVVLKNQHQLTPKAQYELTRRFDPSATQYGHGKTLDAKRSILHPDLKTIPHQPQVQVIGHGFIDSYEGLENITLKHPHHRTFHRDPIPQEDDYDSTRFYRWHIDAALYGLNPPIVTTLLAVKVPGGRRQTVRYDDGSGETMDVPLGTTAFASGERMFELLSEEDKEFALSSRVEYAPHPYIWMSPARSLPTGLGLHSDDLELPLSELPPIDESAIQILPMVWKNPATGKPALQIHPSAVRKIHCGDGTVIDDLKKVREIAYKLQRPAISPQYVYAHDWEEGDLVLFHNRGVLHSVVGAFGEGEVRLFRQCNLAAGEGVVPYRE</sequence>
<reference key="1">
    <citation type="journal article" date="2005" name="Mol. Microbiol.">
        <title>Convergent evolution of hydroxylation mechanisms in the fungal kingdom: molybdenum cofactor-independent hydroxylation of xanthine via alpha-ketoglutarate-dependent dioxygenases.</title>
        <authorList>
            <person name="Cultrone A."/>
            <person name="Scazzocchio C."/>
            <person name="Rochet M."/>
            <person name="Montero-Moran G."/>
            <person name="Drevet C."/>
            <person name="Fernandez-Martin R."/>
        </authorList>
    </citation>
    <scope>NUCLEOTIDE SEQUENCE [GENOMIC DNA]</scope>
    <scope>FUNCTION</scope>
    <scope>CATALYTIC ACTIVITY</scope>
    <scope>BIOPHYSICOCHEMICAL PROPERTIES</scope>
    <scope>MUTAGENESIS OF ALA-167</scope>
    <source>
        <strain>Glasgow wild type</strain>
    </source>
</reference>
<reference key="2">
    <citation type="journal article" date="2007" name="Biochemistry">
        <title>Purification and characterization of the FeII- and alpha-ketoglutarate-dependent xanthine hydroxylase from Aspergillus nidulans.</title>
        <authorList>
            <person name="Montero-Moran G.M."/>
            <person name="Li M."/>
            <person name="Rendon-Huerta E."/>
            <person name="Jourdan F."/>
            <person name="Lowe D.J."/>
            <person name="Stumpff-Kane A.W."/>
            <person name="Feig M."/>
            <person name="Scazzocchio C."/>
            <person name="Hausinger R.P."/>
        </authorList>
    </citation>
    <scope>FUNCTION</scope>
    <scope>CATALYTIC ACTIVITY</scope>
    <scope>BIOPHYSICOCHEMICAL PROPERTIES</scope>
    <scope>COFACTOR</scope>
    <scope>ACTIVITY REGULATION</scope>
    <scope>SUBSTRATE SPECIFICITY</scope>
    <scope>PHOSPHORYLATION</scope>
    <scope>GLYCOSYLATION</scope>
</reference>
<reference key="3">
    <citation type="journal article" date="2008" name="Arch. Biochem. Biophys.">
        <title>Characterization of active site variants of xanthine hydroxylase from Aspergillus nidulans.</title>
        <authorList>
            <person name="Li M."/>
            <person name="Mueller T.A."/>
            <person name="Fraser B.A."/>
            <person name="Hausinger R.P."/>
        </authorList>
    </citation>
    <scope>FUNCTION</scope>
    <scope>CATALYTIC ACTIVITY</scope>
    <scope>COFACTOR</scope>
    <scope>ACTIVITY REGULATION</scope>
    <scope>SUBSTRATE SPECIFICITY</scope>
    <scope>MUTAGENESIS OF GLN-101; LYS-122; GLU-137; ASP-138; HIS-149; ASP-151; HIS-340; GLN-356; CYS-357 AND ASN-358</scope>
</reference>
<reference key="4">
    <citation type="journal article" date="2014" name="Fungal Genet. Biol.">
        <title>Purine utilization proteins in the Eurotiales: cellular compartmentalization, phylogenetic conservation and divergence.</title>
        <authorList>
            <person name="Galanopoulou K."/>
            <person name="Scazzocchio C."/>
            <person name="Galinou M.E."/>
            <person name="Liu W."/>
            <person name="Borbolis F."/>
            <person name="Karachaliou M."/>
            <person name="Oestreicher N."/>
            <person name="Hatzinikolaou D.G."/>
            <person name="Diallinas G."/>
            <person name="Amillis S."/>
        </authorList>
    </citation>
    <scope>SUBCELLULAR LOCATION</scope>
</reference>
<accession>Q4QZZ9</accession>
<feature type="chain" id="PRO_0000446004" description="Alpha-ketoglutarate-dependent xanthine dioxygenase xanA">
    <location>
        <begin position="1"/>
        <end position="370"/>
    </location>
</feature>
<feature type="binding site" evidence="1">
    <location>
        <position position="107"/>
    </location>
    <ligand>
        <name>substrate</name>
    </ligand>
</feature>
<feature type="binding site" evidence="1 4">
    <location>
        <position position="149"/>
    </location>
    <ligand>
        <name>Fe cation</name>
        <dbReference type="ChEBI" id="CHEBI:24875"/>
        <note>catalytic</note>
    </ligand>
</feature>
<feature type="binding site" evidence="1 4">
    <location>
        <position position="151"/>
    </location>
    <ligand>
        <name>Fe cation</name>
        <dbReference type="ChEBI" id="CHEBI:24875"/>
        <note>catalytic</note>
    </ligand>
</feature>
<feature type="binding site" evidence="1">
    <location>
        <position position="195"/>
    </location>
    <ligand>
        <name>2-oxoglutarate</name>
        <dbReference type="ChEBI" id="CHEBI:16810"/>
    </ligand>
</feature>
<feature type="binding site" evidence="1">
    <location>
        <position position="325"/>
    </location>
    <ligand>
        <name>2-oxoglutarate</name>
        <dbReference type="ChEBI" id="CHEBI:16810"/>
    </ligand>
</feature>
<feature type="binding site" evidence="1 4">
    <location>
        <position position="340"/>
    </location>
    <ligand>
        <name>Fe cation</name>
        <dbReference type="ChEBI" id="CHEBI:24875"/>
        <note>catalytic</note>
    </ligand>
</feature>
<feature type="binding site" evidence="1">
    <location>
        <position position="352"/>
    </location>
    <ligand>
        <name>2-oxoglutarate</name>
        <dbReference type="ChEBI" id="CHEBI:16810"/>
    </ligand>
</feature>
<feature type="mutagenesis site" description="Leads to elevated ferroxidase activity in the absence of substrates." evidence="4">
    <original>Q</original>
    <variation>A</variation>
    <location>
        <position position="101"/>
    </location>
</feature>
<feature type="mutagenesis site" description="Affects the binding of 2-oxoglutarate." evidence="4">
    <original>K</original>
    <variation>A</variation>
    <location>
        <position position="122"/>
    </location>
</feature>
<feature type="mutagenesis site" description="Exhibits relatively enhanced activity and affects the inhibition by 6,8-dihydroxypurine." evidence="4">
    <original>E</original>
    <variation>A</variation>
    <location>
        <position position="137"/>
    </location>
</feature>
<feature type="mutagenesis site" description="Exhibits relatively enhanced activity and affects the inhibition by 6,8-dihydroxypurine." evidence="4">
    <original>D</original>
    <variation>A</variation>
    <location>
        <position position="138"/>
    </location>
</feature>
<feature type="mutagenesis site" description="Impairs catalytic activity." evidence="4">
    <original>H</original>
    <variation>A</variation>
    <location>
        <position position="149"/>
    </location>
</feature>
<feature type="mutagenesis site" description="Impairs catalytic activity." evidence="4">
    <original>D</original>
    <variation>A</variation>
    <location>
        <position position="151"/>
    </location>
</feature>
<feature type="mutagenesis site" description="In xanA1; impairs catalytic activity." evidence="2">
    <original>A</original>
    <variation>D</variation>
    <location>
        <position position="167"/>
    </location>
</feature>
<feature type="mutagenesis site" description="Exhibits only 0.17% of the wild-type enzyme activity." evidence="4">
    <original>H</original>
    <variation>A</variation>
    <location>
        <position position="340"/>
    </location>
</feature>
<feature type="mutagenesis site" description="Leads to elevated ferroxidase activity in the absence of substrates and affects the inhibition by 6,8-dihydroxypurine." evidence="4">
    <original>Q</original>
    <variation>A</variation>
    <location>
        <position position="356"/>
    </location>
</feature>
<feature type="mutagenesis site" description="Exhibits relatively enhanced activity, resistance to thiol-specific inhibitors such as DTNB or iodoacetamide, and elevated ferroxidase activity in the absence of substrates." evidence="4">
    <original>C</original>
    <variation>A</variation>
    <location>
        <position position="357"/>
    </location>
</feature>
<feature type="mutagenesis site" description="Exhibits a 23-fold decrease in kcat/Km and affects the inhibition by 6,8-dihydroxypurine." evidence="4">
    <original>N</original>
    <variation>A</variation>
    <location>
        <position position="358"/>
    </location>
</feature>
<keyword id="KW-0963">Cytoplasm</keyword>
<keyword id="KW-0223">Dioxygenase</keyword>
<keyword id="KW-0325">Glycoprotein</keyword>
<keyword id="KW-0408">Iron</keyword>
<keyword id="KW-0479">Metal-binding</keyword>
<keyword id="KW-0560">Oxidoreductase</keyword>
<keyword id="KW-0597">Phosphoprotein</keyword>
<name>XANA_EMEND</name>
<gene>
    <name evidence="6" type="primary">xanA</name>
</gene>
<dbReference type="EC" id="1.14.11.48" evidence="2 3 4"/>
<dbReference type="EMBL" id="AJ877916">
    <property type="protein sequence ID" value="CAI47587.1"/>
    <property type="molecule type" value="Genomic_DNA"/>
</dbReference>
<dbReference type="SMR" id="Q4QZZ9"/>
<dbReference type="BRENDA" id="1.14.11.48">
    <property type="organism ID" value="517"/>
</dbReference>
<dbReference type="GO" id="GO:0005829">
    <property type="term" value="C:cytosol"/>
    <property type="evidence" value="ECO:0007669"/>
    <property type="project" value="UniProtKB-SubCell"/>
</dbReference>
<dbReference type="GO" id="GO:0097641">
    <property type="term" value="F:alpha-ketoglutarate-dependent xanthine dioxygenase activity"/>
    <property type="evidence" value="ECO:0007669"/>
    <property type="project" value="RHEA"/>
</dbReference>
<dbReference type="GO" id="GO:0051213">
    <property type="term" value="F:dioxygenase activity"/>
    <property type="evidence" value="ECO:0000314"/>
    <property type="project" value="AspGD"/>
</dbReference>
<dbReference type="GO" id="GO:0046872">
    <property type="term" value="F:metal ion binding"/>
    <property type="evidence" value="ECO:0007669"/>
    <property type="project" value="UniProtKB-KW"/>
</dbReference>
<dbReference type="GO" id="GO:0034418">
    <property type="term" value="P:urate biosynthetic process"/>
    <property type="evidence" value="ECO:0000315"/>
    <property type="project" value="AspGD"/>
</dbReference>
<dbReference type="GO" id="GO:0009115">
    <property type="term" value="P:xanthine catabolic process"/>
    <property type="evidence" value="ECO:0000314"/>
    <property type="project" value="AspGD"/>
</dbReference>
<dbReference type="FunFam" id="3.60.130.10:FF:000034">
    <property type="entry name" value="Alpha-ketoglutarate-dependent xanthine dioxygenase xanA"/>
    <property type="match status" value="1"/>
</dbReference>
<dbReference type="Gene3D" id="3.60.130.10">
    <property type="entry name" value="Clavaminate synthase-like"/>
    <property type="match status" value="1"/>
</dbReference>
<dbReference type="InterPro" id="IPR042098">
    <property type="entry name" value="TauD-like_sf"/>
</dbReference>
<dbReference type="InterPro" id="IPR003819">
    <property type="entry name" value="TauD/TfdA-like"/>
</dbReference>
<dbReference type="InterPro" id="IPR051178">
    <property type="entry name" value="TfdA_dioxygenase"/>
</dbReference>
<dbReference type="PANTHER" id="PTHR43779:SF2">
    <property type="entry name" value="ALPHA-KETOGLUTARATE-DEPENDENT XANTHINE DIOXYGENASE XAN1"/>
    <property type="match status" value="1"/>
</dbReference>
<dbReference type="PANTHER" id="PTHR43779">
    <property type="entry name" value="DIOXYGENASE RV0097-RELATED"/>
    <property type="match status" value="1"/>
</dbReference>
<dbReference type="Pfam" id="PF02668">
    <property type="entry name" value="TauD"/>
    <property type="match status" value="1"/>
</dbReference>
<dbReference type="SUPFAM" id="SSF51197">
    <property type="entry name" value="Clavaminate synthase-like"/>
    <property type="match status" value="1"/>
</dbReference>
<evidence type="ECO:0000250" key="1">
    <source>
        <dbReference type="UniProtKB" id="P37610"/>
    </source>
</evidence>
<evidence type="ECO:0000269" key="2">
    <source>
    </source>
</evidence>
<evidence type="ECO:0000269" key="3">
    <source>
    </source>
</evidence>
<evidence type="ECO:0000269" key="4">
    <source>
    </source>
</evidence>
<evidence type="ECO:0000269" key="5">
    <source>
    </source>
</evidence>
<evidence type="ECO:0000303" key="6">
    <source>
    </source>
</evidence>
<evidence type="ECO:0000305" key="7"/>
<protein>
    <recommendedName>
        <fullName evidence="6">Alpha-ketoglutarate-dependent xanthine dioxygenase xanA</fullName>
        <ecNumber evidence="2 3 4">1.14.11.48</ecNumber>
    </recommendedName>
</protein>
<proteinExistence type="evidence at protein level"/>